<comment type="function">
    <text evidence="1">Attaches a formyl group to the free amino group of methionyl-tRNA(fMet). The formyl group appears to play a dual role in the initiator identity of N-formylmethionyl-tRNA by promoting its recognition by IF2 and preventing the misappropriation of this tRNA by the elongation apparatus.</text>
</comment>
<comment type="catalytic activity">
    <reaction evidence="1">
        <text>L-methionyl-tRNA(fMet) + (6R)-10-formyltetrahydrofolate = N-formyl-L-methionyl-tRNA(fMet) + (6S)-5,6,7,8-tetrahydrofolate + H(+)</text>
        <dbReference type="Rhea" id="RHEA:24380"/>
        <dbReference type="Rhea" id="RHEA-COMP:9952"/>
        <dbReference type="Rhea" id="RHEA-COMP:9953"/>
        <dbReference type="ChEBI" id="CHEBI:15378"/>
        <dbReference type="ChEBI" id="CHEBI:57453"/>
        <dbReference type="ChEBI" id="CHEBI:78530"/>
        <dbReference type="ChEBI" id="CHEBI:78844"/>
        <dbReference type="ChEBI" id="CHEBI:195366"/>
        <dbReference type="EC" id="2.1.2.9"/>
    </reaction>
</comment>
<comment type="similarity">
    <text evidence="1">Belongs to the Fmt family.</text>
</comment>
<proteinExistence type="inferred from homology"/>
<keyword id="KW-0648">Protein biosynthesis</keyword>
<keyword id="KW-0808">Transferase</keyword>
<gene>
    <name evidence="1" type="primary">fmt</name>
    <name type="ordered locus">BCE33L3625</name>
</gene>
<sequence length="314" mass="34736">MIKVVFMGTPDFSVPVLRRLIEDGYDVIGVVTQPDRPVGRKKVLTPTPVKVEAEKHGIPVLQPLRIREKDEYEKVLALEPDLIVTAAFGQIVPNEILEAPKYGCINVHASLLPELRGGAPIHYAIMEGKEKTGITIMYMVEKLDAGDILTQVEVEIEERETTGSLFDKLSEAGAHLLSKTVPLLIQGKLEPIKQNEEEVTFAYNIKREQEKIDWTKTGEEVYNHIRGLNPWPVAYTTLAGQVVKVWWGEKVPVTKSAEAGTIVAIEEDGFVVATGNETGVKITELQPSGKKRMSCSQFLRGTKPEIGTKLGENA</sequence>
<organism>
    <name type="scientific">Bacillus cereus (strain ZK / E33L)</name>
    <dbReference type="NCBI Taxonomy" id="288681"/>
    <lineage>
        <taxon>Bacteria</taxon>
        <taxon>Bacillati</taxon>
        <taxon>Bacillota</taxon>
        <taxon>Bacilli</taxon>
        <taxon>Bacillales</taxon>
        <taxon>Bacillaceae</taxon>
        <taxon>Bacillus</taxon>
        <taxon>Bacillus cereus group</taxon>
    </lineage>
</organism>
<accession>Q636G0</accession>
<name>FMT_BACCZ</name>
<dbReference type="EC" id="2.1.2.9" evidence="1"/>
<dbReference type="EMBL" id="CP000001">
    <property type="protein sequence ID" value="AAU16639.1"/>
    <property type="molecule type" value="Genomic_DNA"/>
</dbReference>
<dbReference type="RefSeq" id="WP_000598790.1">
    <property type="nucleotide sequence ID" value="NZ_CP009968.1"/>
</dbReference>
<dbReference type="SMR" id="Q636G0"/>
<dbReference type="GeneID" id="45023695"/>
<dbReference type="KEGG" id="bcz:BCE33L3625"/>
<dbReference type="PATRIC" id="fig|288681.22.peg.1786"/>
<dbReference type="Proteomes" id="UP000002612">
    <property type="component" value="Chromosome"/>
</dbReference>
<dbReference type="GO" id="GO:0005829">
    <property type="term" value="C:cytosol"/>
    <property type="evidence" value="ECO:0007669"/>
    <property type="project" value="TreeGrafter"/>
</dbReference>
<dbReference type="GO" id="GO:0004479">
    <property type="term" value="F:methionyl-tRNA formyltransferase activity"/>
    <property type="evidence" value="ECO:0007669"/>
    <property type="project" value="UniProtKB-UniRule"/>
</dbReference>
<dbReference type="CDD" id="cd08646">
    <property type="entry name" value="FMT_core_Met-tRNA-FMT_N"/>
    <property type="match status" value="1"/>
</dbReference>
<dbReference type="CDD" id="cd08704">
    <property type="entry name" value="Met_tRNA_FMT_C"/>
    <property type="match status" value="1"/>
</dbReference>
<dbReference type="FunFam" id="3.10.25.10:FF:000003">
    <property type="entry name" value="Methionyl-tRNA formyltransferase"/>
    <property type="match status" value="1"/>
</dbReference>
<dbReference type="FunFam" id="3.40.50.170:FF:000004">
    <property type="entry name" value="Methionyl-tRNA formyltransferase"/>
    <property type="match status" value="1"/>
</dbReference>
<dbReference type="Gene3D" id="3.10.25.10">
    <property type="entry name" value="Formyl transferase, C-terminal domain"/>
    <property type="match status" value="1"/>
</dbReference>
<dbReference type="Gene3D" id="3.40.50.170">
    <property type="entry name" value="Formyl transferase, N-terminal domain"/>
    <property type="match status" value="1"/>
</dbReference>
<dbReference type="HAMAP" id="MF_00182">
    <property type="entry name" value="Formyl_trans"/>
    <property type="match status" value="1"/>
</dbReference>
<dbReference type="InterPro" id="IPR005794">
    <property type="entry name" value="Fmt"/>
</dbReference>
<dbReference type="InterPro" id="IPR005793">
    <property type="entry name" value="Formyl_trans_C"/>
</dbReference>
<dbReference type="InterPro" id="IPR037022">
    <property type="entry name" value="Formyl_trans_C_sf"/>
</dbReference>
<dbReference type="InterPro" id="IPR002376">
    <property type="entry name" value="Formyl_transf_N"/>
</dbReference>
<dbReference type="InterPro" id="IPR036477">
    <property type="entry name" value="Formyl_transf_N_sf"/>
</dbReference>
<dbReference type="InterPro" id="IPR011034">
    <property type="entry name" value="Formyl_transferase-like_C_sf"/>
</dbReference>
<dbReference type="InterPro" id="IPR001555">
    <property type="entry name" value="GART_AS"/>
</dbReference>
<dbReference type="InterPro" id="IPR044135">
    <property type="entry name" value="Met-tRNA-FMT_C"/>
</dbReference>
<dbReference type="InterPro" id="IPR041711">
    <property type="entry name" value="Met-tRNA-FMT_N"/>
</dbReference>
<dbReference type="NCBIfam" id="TIGR00460">
    <property type="entry name" value="fmt"/>
    <property type="match status" value="1"/>
</dbReference>
<dbReference type="PANTHER" id="PTHR11138">
    <property type="entry name" value="METHIONYL-TRNA FORMYLTRANSFERASE"/>
    <property type="match status" value="1"/>
</dbReference>
<dbReference type="PANTHER" id="PTHR11138:SF5">
    <property type="entry name" value="METHIONYL-TRNA FORMYLTRANSFERASE, MITOCHONDRIAL"/>
    <property type="match status" value="1"/>
</dbReference>
<dbReference type="Pfam" id="PF02911">
    <property type="entry name" value="Formyl_trans_C"/>
    <property type="match status" value="1"/>
</dbReference>
<dbReference type="Pfam" id="PF00551">
    <property type="entry name" value="Formyl_trans_N"/>
    <property type="match status" value="1"/>
</dbReference>
<dbReference type="SUPFAM" id="SSF50486">
    <property type="entry name" value="FMT C-terminal domain-like"/>
    <property type="match status" value="1"/>
</dbReference>
<dbReference type="SUPFAM" id="SSF53328">
    <property type="entry name" value="Formyltransferase"/>
    <property type="match status" value="1"/>
</dbReference>
<dbReference type="PROSITE" id="PS00373">
    <property type="entry name" value="GART"/>
    <property type="match status" value="1"/>
</dbReference>
<evidence type="ECO:0000255" key="1">
    <source>
        <dbReference type="HAMAP-Rule" id="MF_00182"/>
    </source>
</evidence>
<feature type="chain" id="PRO_1000020019" description="Methionyl-tRNA formyltransferase">
    <location>
        <begin position="1"/>
        <end position="314"/>
    </location>
</feature>
<feature type="binding site" evidence="1">
    <location>
        <begin position="110"/>
        <end position="113"/>
    </location>
    <ligand>
        <name>(6S)-5,6,7,8-tetrahydrofolate</name>
        <dbReference type="ChEBI" id="CHEBI:57453"/>
    </ligand>
</feature>
<reference key="1">
    <citation type="journal article" date="2006" name="J. Bacteriol.">
        <title>Pathogenomic sequence analysis of Bacillus cereus and Bacillus thuringiensis isolates closely related to Bacillus anthracis.</title>
        <authorList>
            <person name="Han C.S."/>
            <person name="Xie G."/>
            <person name="Challacombe J.F."/>
            <person name="Altherr M.R."/>
            <person name="Bhotika S.S."/>
            <person name="Bruce D."/>
            <person name="Campbell C.S."/>
            <person name="Campbell M.L."/>
            <person name="Chen J."/>
            <person name="Chertkov O."/>
            <person name="Cleland C."/>
            <person name="Dimitrijevic M."/>
            <person name="Doggett N.A."/>
            <person name="Fawcett J.J."/>
            <person name="Glavina T."/>
            <person name="Goodwin L.A."/>
            <person name="Hill K.K."/>
            <person name="Hitchcock P."/>
            <person name="Jackson P.J."/>
            <person name="Keim P."/>
            <person name="Kewalramani A.R."/>
            <person name="Longmire J."/>
            <person name="Lucas S."/>
            <person name="Malfatti S."/>
            <person name="McMurry K."/>
            <person name="Meincke L.J."/>
            <person name="Misra M."/>
            <person name="Moseman B.L."/>
            <person name="Mundt M."/>
            <person name="Munk A.C."/>
            <person name="Okinaka R.T."/>
            <person name="Parson-Quintana B."/>
            <person name="Reilly L.P."/>
            <person name="Richardson P."/>
            <person name="Robinson D.L."/>
            <person name="Rubin E."/>
            <person name="Saunders E."/>
            <person name="Tapia R."/>
            <person name="Tesmer J.G."/>
            <person name="Thayer N."/>
            <person name="Thompson L.S."/>
            <person name="Tice H."/>
            <person name="Ticknor L.O."/>
            <person name="Wills P.L."/>
            <person name="Brettin T.S."/>
            <person name="Gilna P."/>
        </authorList>
    </citation>
    <scope>NUCLEOTIDE SEQUENCE [LARGE SCALE GENOMIC DNA]</scope>
    <source>
        <strain>ZK / E33L</strain>
    </source>
</reference>
<protein>
    <recommendedName>
        <fullName evidence="1">Methionyl-tRNA formyltransferase</fullName>
        <ecNumber evidence="1">2.1.2.9</ecNumber>
    </recommendedName>
</protein>